<accession>B7MXT6</accession>
<comment type="function">
    <text evidence="1">Bifunctional enzyme that catalyzes the oxidative decarboxylation of UDP-glucuronic acid (UDP-GlcUA) to UDP-4-keto-arabinose (UDP-Ara4O) and the addition of a formyl group to UDP-4-amino-4-deoxy-L-arabinose (UDP-L-Ara4N) to form UDP-L-4-formamido-arabinose (UDP-L-Ara4FN). The modified arabinose is attached to lipid A and is required for resistance to polymyxin and cationic antimicrobial peptides.</text>
</comment>
<comment type="catalytic activity">
    <reaction evidence="1">
        <text>UDP-alpha-D-glucuronate + NAD(+) = UDP-beta-L-threo-pentopyranos-4-ulose + CO2 + NADH</text>
        <dbReference type="Rhea" id="RHEA:24702"/>
        <dbReference type="ChEBI" id="CHEBI:16526"/>
        <dbReference type="ChEBI" id="CHEBI:57540"/>
        <dbReference type="ChEBI" id="CHEBI:57945"/>
        <dbReference type="ChEBI" id="CHEBI:58052"/>
        <dbReference type="ChEBI" id="CHEBI:58710"/>
        <dbReference type="EC" id="1.1.1.305"/>
    </reaction>
</comment>
<comment type="catalytic activity">
    <reaction evidence="1">
        <text>UDP-4-amino-4-deoxy-beta-L-arabinose + (6R)-10-formyltetrahydrofolate = UDP-4-deoxy-4-formamido-beta-L-arabinose + (6S)-5,6,7,8-tetrahydrofolate + H(+)</text>
        <dbReference type="Rhea" id="RHEA:24706"/>
        <dbReference type="ChEBI" id="CHEBI:15378"/>
        <dbReference type="ChEBI" id="CHEBI:57453"/>
        <dbReference type="ChEBI" id="CHEBI:58708"/>
        <dbReference type="ChEBI" id="CHEBI:58709"/>
        <dbReference type="ChEBI" id="CHEBI:195366"/>
        <dbReference type="EC" id="2.1.2.13"/>
    </reaction>
</comment>
<comment type="pathway">
    <text evidence="1">Nucleotide-sugar biosynthesis; UDP-4-deoxy-4-formamido-beta-L-arabinose biosynthesis; UDP-4-deoxy-4-formamido-beta-L-arabinose from UDP-alpha-D-glucuronate: step 1/3.</text>
</comment>
<comment type="pathway">
    <text evidence="1">Nucleotide-sugar biosynthesis; UDP-4-deoxy-4-formamido-beta-L-arabinose biosynthesis; UDP-4-deoxy-4-formamido-beta-L-arabinose from UDP-alpha-D-glucuronate: step 3/3.</text>
</comment>
<comment type="pathway">
    <text evidence="1">Bacterial outer membrane biogenesis; lipopolysaccharide biosynthesis.</text>
</comment>
<comment type="subunit">
    <text evidence="1">Homohexamer, formed by a dimer of trimers.</text>
</comment>
<comment type="similarity">
    <text evidence="1">In the N-terminal section; belongs to the Fmt family. UDP-L-Ara4N formyltransferase subfamily.</text>
</comment>
<comment type="similarity">
    <text evidence="1">In the C-terminal section; belongs to the NAD(P)-dependent epimerase/dehydratase family. UDP-glucuronic acid decarboxylase subfamily.</text>
</comment>
<feature type="chain" id="PRO_0000379987" description="Bifunctional polymyxin resistance protein ArnA">
    <location>
        <begin position="1"/>
        <end position="660"/>
    </location>
</feature>
<feature type="region of interest" description="Formyltransferase ArnAFT">
    <location>
        <begin position="1"/>
        <end position="304"/>
    </location>
</feature>
<feature type="region of interest" description="Dehydrogenase ArnADH">
    <location>
        <begin position="314"/>
        <end position="660"/>
    </location>
</feature>
<feature type="active site" description="Proton donor; for formyltransferase activity" evidence="1">
    <location>
        <position position="104"/>
    </location>
</feature>
<feature type="active site" description="Proton acceptor; for decarboxylase activity" evidence="1">
    <location>
        <position position="434"/>
    </location>
</feature>
<feature type="active site" description="Proton donor; for decarboxylase activity" evidence="1">
    <location>
        <position position="619"/>
    </location>
</feature>
<feature type="binding site" evidence="1">
    <location>
        <begin position="86"/>
        <end position="88"/>
    </location>
    <ligand>
        <name>(6R)-10-formyltetrahydrofolate</name>
        <dbReference type="ChEBI" id="CHEBI:195366"/>
    </ligand>
</feature>
<feature type="binding site" evidence="1">
    <location>
        <position position="114"/>
    </location>
    <ligand>
        <name>(6R)-10-formyltetrahydrofolate</name>
        <dbReference type="ChEBI" id="CHEBI:195366"/>
    </ligand>
</feature>
<feature type="binding site" evidence="1">
    <location>
        <begin position="136"/>
        <end position="140"/>
    </location>
    <ligand>
        <name>(6R)-10-formyltetrahydrofolate</name>
        <dbReference type="ChEBI" id="CHEBI:195366"/>
    </ligand>
</feature>
<feature type="binding site" evidence="1">
    <location>
        <position position="347"/>
    </location>
    <ligand>
        <name>NAD(+)</name>
        <dbReference type="ChEBI" id="CHEBI:57540"/>
    </ligand>
</feature>
<feature type="binding site" evidence="1">
    <location>
        <begin position="368"/>
        <end position="369"/>
    </location>
    <ligand>
        <name>NAD(+)</name>
        <dbReference type="ChEBI" id="CHEBI:57540"/>
    </ligand>
</feature>
<feature type="binding site" evidence="1">
    <location>
        <position position="393"/>
    </location>
    <ligand>
        <name>UDP-alpha-D-glucuronate</name>
        <dbReference type="ChEBI" id="CHEBI:58052"/>
    </ligand>
</feature>
<feature type="binding site" evidence="1">
    <location>
        <position position="398"/>
    </location>
    <ligand>
        <name>UDP-alpha-D-glucuronate</name>
        <dbReference type="ChEBI" id="CHEBI:58052"/>
    </ligand>
</feature>
<feature type="binding site" evidence="1">
    <location>
        <begin position="432"/>
        <end position="433"/>
    </location>
    <ligand>
        <name>UDP-alpha-D-glucuronate</name>
        <dbReference type="ChEBI" id="CHEBI:58052"/>
    </ligand>
</feature>
<feature type="binding site" evidence="1">
    <location>
        <position position="460"/>
    </location>
    <ligand>
        <name>UDP-alpha-D-glucuronate</name>
        <dbReference type="ChEBI" id="CHEBI:58052"/>
    </ligand>
</feature>
<feature type="binding site" evidence="1">
    <location>
        <position position="492"/>
    </location>
    <ligand>
        <name>UDP-alpha-D-glucuronate</name>
        <dbReference type="ChEBI" id="CHEBI:58052"/>
    </ligand>
</feature>
<feature type="binding site" evidence="1">
    <location>
        <begin position="526"/>
        <end position="535"/>
    </location>
    <ligand>
        <name>UDP-alpha-D-glucuronate</name>
        <dbReference type="ChEBI" id="CHEBI:58052"/>
    </ligand>
</feature>
<feature type="binding site" evidence="1">
    <location>
        <position position="613"/>
    </location>
    <ligand>
        <name>UDP-alpha-D-glucuronate</name>
        <dbReference type="ChEBI" id="CHEBI:58052"/>
    </ligand>
</feature>
<feature type="site" description="Transition state stabilizer" evidence="1">
    <location>
        <position position="102"/>
    </location>
</feature>
<feature type="site" description="Raises pKa of active site His" evidence="1">
    <location>
        <position position="140"/>
    </location>
</feature>
<proteinExistence type="inferred from homology"/>
<gene>
    <name evidence="1" type="primary">arnA</name>
    <name type="ordered locus">ECED1_2721</name>
</gene>
<reference key="1">
    <citation type="journal article" date="2009" name="PLoS Genet.">
        <title>Organised genome dynamics in the Escherichia coli species results in highly diverse adaptive paths.</title>
        <authorList>
            <person name="Touchon M."/>
            <person name="Hoede C."/>
            <person name="Tenaillon O."/>
            <person name="Barbe V."/>
            <person name="Baeriswyl S."/>
            <person name="Bidet P."/>
            <person name="Bingen E."/>
            <person name="Bonacorsi S."/>
            <person name="Bouchier C."/>
            <person name="Bouvet O."/>
            <person name="Calteau A."/>
            <person name="Chiapello H."/>
            <person name="Clermont O."/>
            <person name="Cruveiller S."/>
            <person name="Danchin A."/>
            <person name="Diard M."/>
            <person name="Dossat C."/>
            <person name="Karoui M.E."/>
            <person name="Frapy E."/>
            <person name="Garry L."/>
            <person name="Ghigo J.M."/>
            <person name="Gilles A.M."/>
            <person name="Johnson J."/>
            <person name="Le Bouguenec C."/>
            <person name="Lescat M."/>
            <person name="Mangenot S."/>
            <person name="Martinez-Jehanne V."/>
            <person name="Matic I."/>
            <person name="Nassif X."/>
            <person name="Oztas S."/>
            <person name="Petit M.A."/>
            <person name="Pichon C."/>
            <person name="Rouy Z."/>
            <person name="Ruf C.S."/>
            <person name="Schneider D."/>
            <person name="Tourret J."/>
            <person name="Vacherie B."/>
            <person name="Vallenet D."/>
            <person name="Medigue C."/>
            <person name="Rocha E.P.C."/>
            <person name="Denamur E."/>
        </authorList>
    </citation>
    <scope>NUCLEOTIDE SEQUENCE [LARGE SCALE GENOMIC DNA]</scope>
    <source>
        <strain>ED1a</strain>
    </source>
</reference>
<evidence type="ECO:0000255" key="1">
    <source>
        <dbReference type="HAMAP-Rule" id="MF_01166"/>
    </source>
</evidence>
<protein>
    <recommendedName>
        <fullName evidence="1">Bifunctional polymyxin resistance protein ArnA</fullName>
    </recommendedName>
    <domain>
        <recommendedName>
            <fullName evidence="1">UDP-4-amino-4-deoxy-L-arabinose formyltransferase</fullName>
            <ecNumber evidence="1">2.1.2.13</ecNumber>
        </recommendedName>
        <alternativeName>
            <fullName evidence="1">ArnAFT</fullName>
        </alternativeName>
        <alternativeName>
            <fullName evidence="1">UDP-L-Ara4N formyltransferase</fullName>
        </alternativeName>
    </domain>
    <domain>
        <recommendedName>
            <fullName evidence="1">UDP-glucuronic acid oxidase, UDP-4-keto-hexauronic acid decarboxylating</fullName>
            <ecNumber evidence="1">1.1.1.305</ecNumber>
        </recommendedName>
        <alternativeName>
            <fullName evidence="1">ArnADH</fullName>
        </alternativeName>
        <alternativeName>
            <fullName evidence="1">UDP-GlcUA decarboxylase</fullName>
        </alternativeName>
        <alternativeName>
            <fullName evidence="1">UDP-glucuronic acid dehydrogenase</fullName>
        </alternativeName>
    </domain>
</protein>
<name>ARNA_ECO81</name>
<sequence length="660" mass="74394">MKTVVFAYHDMGCLGIEALLSAGYEISAIFTHTDNPGEKAFYGSVARLAAERGIPVYAPDNVNHPLWMERIAQLSPEVIFSFYYRHLICDEILQLAPRGAFNLHGSLLPKYRGRAPLNWVLVNGETETGVTLHRMVKRADAGAIVAQLRVAIAPDDIAITLHHKLCHAARQLLEQTLPAIKHGNILEIAQRENEATCFGRRTPDDSFLEWHKPASVLHNMVRAVADPWPGAFSYVGNQKFTVWSSRVHPHASKAQPGSVISVAPLLIACGDGALEIVTGQAGDGITMQGSQLAQTLGLVQGSRLNSQPACAARRRTRVLILGVNGFIGNHLTERLLREDHYEVYGLDIGSDAISRFMNHPHFHFVEGDISIHSEWIEYHVKKCDVVLPLVAIATPIEYTRNPLRVFELDFEENLRIIRYCVKYRKRIIFPSTSEVYGMCSDKYFDEDHSNLIVGPVNKPRWIYSVSKQLLDRVIWAYGEKEGLQFTLFRPFNWMGPRLDNLNAARIGSSRAITQLILNLVEGSPIKLIDGGKQKRCFTDIRDGIEALYRIIENAGNRCDGEIINIGNPENEASIEELGEMLLASFEKHPLRHYFPPFAGFRVVESSSYYGKGYQDVEHRKPSIRNARRCLNWEPKIDMQETIDETLDFFLRTVDLTDKPS</sequence>
<keyword id="KW-0046">Antibiotic resistance</keyword>
<keyword id="KW-0441">Lipid A biosynthesis</keyword>
<keyword id="KW-0444">Lipid biosynthesis</keyword>
<keyword id="KW-0443">Lipid metabolism</keyword>
<keyword id="KW-0448">Lipopolysaccharide biosynthesis</keyword>
<keyword id="KW-0511">Multifunctional enzyme</keyword>
<keyword id="KW-0520">NAD</keyword>
<keyword id="KW-0560">Oxidoreductase</keyword>
<keyword id="KW-0808">Transferase</keyword>
<dbReference type="EC" id="2.1.2.13" evidence="1"/>
<dbReference type="EC" id="1.1.1.305" evidence="1"/>
<dbReference type="EMBL" id="CU928162">
    <property type="protein sequence ID" value="CAR08902.2"/>
    <property type="molecule type" value="Genomic_DNA"/>
</dbReference>
<dbReference type="RefSeq" id="WP_000860302.1">
    <property type="nucleotide sequence ID" value="NC_011745.1"/>
</dbReference>
<dbReference type="SMR" id="B7MXT6"/>
<dbReference type="KEGG" id="ecq:ECED1_2721"/>
<dbReference type="HOGENOM" id="CLU_007383_23_2_6"/>
<dbReference type="UniPathway" id="UPA00030"/>
<dbReference type="UniPathway" id="UPA00032">
    <property type="reaction ID" value="UER00492"/>
</dbReference>
<dbReference type="UniPathway" id="UPA00032">
    <property type="reaction ID" value="UER00494"/>
</dbReference>
<dbReference type="Proteomes" id="UP000000748">
    <property type="component" value="Chromosome"/>
</dbReference>
<dbReference type="GO" id="GO:0016020">
    <property type="term" value="C:membrane"/>
    <property type="evidence" value="ECO:0007669"/>
    <property type="project" value="GOC"/>
</dbReference>
<dbReference type="GO" id="GO:0016831">
    <property type="term" value="F:carboxy-lyase activity"/>
    <property type="evidence" value="ECO:0007669"/>
    <property type="project" value="InterPro"/>
</dbReference>
<dbReference type="GO" id="GO:0099619">
    <property type="term" value="F:UDP-4-amino-4-deoxy-L-arabinose formyltransferase activity"/>
    <property type="evidence" value="ECO:0007669"/>
    <property type="project" value="UniProtKB-EC"/>
</dbReference>
<dbReference type="GO" id="GO:0099618">
    <property type="term" value="F:UDP-glucuronate dehydrogenase activity"/>
    <property type="evidence" value="ECO:0007669"/>
    <property type="project" value="UniProtKB-EC"/>
</dbReference>
<dbReference type="GO" id="GO:0009245">
    <property type="term" value="P:lipid A biosynthetic process"/>
    <property type="evidence" value="ECO:0007669"/>
    <property type="project" value="UniProtKB-KW"/>
</dbReference>
<dbReference type="GO" id="GO:0009103">
    <property type="term" value="P:lipopolysaccharide biosynthetic process"/>
    <property type="evidence" value="ECO:0007669"/>
    <property type="project" value="UniProtKB-UniRule"/>
</dbReference>
<dbReference type="GO" id="GO:0046677">
    <property type="term" value="P:response to antibiotic"/>
    <property type="evidence" value="ECO:0007669"/>
    <property type="project" value="UniProtKB-KW"/>
</dbReference>
<dbReference type="CDD" id="cd08702">
    <property type="entry name" value="Arna_FMT_C"/>
    <property type="match status" value="1"/>
</dbReference>
<dbReference type="CDD" id="cd05257">
    <property type="entry name" value="Arna_like_SDR_e"/>
    <property type="match status" value="1"/>
</dbReference>
<dbReference type="CDD" id="cd08644">
    <property type="entry name" value="FMT_core_ArnA_N"/>
    <property type="match status" value="1"/>
</dbReference>
<dbReference type="FunFam" id="3.40.50.12230:FF:000002">
    <property type="entry name" value="Bifunctional polymyxin resistance protein ArnA"/>
    <property type="match status" value="1"/>
</dbReference>
<dbReference type="FunFam" id="3.40.50.720:FF:000197">
    <property type="entry name" value="Bifunctional polymyxin resistance protein ArnA"/>
    <property type="match status" value="1"/>
</dbReference>
<dbReference type="Gene3D" id="3.40.50.12230">
    <property type="match status" value="1"/>
</dbReference>
<dbReference type="Gene3D" id="3.40.50.720">
    <property type="entry name" value="NAD(P)-binding Rossmann-like Domain"/>
    <property type="match status" value="1"/>
</dbReference>
<dbReference type="HAMAP" id="MF_01166">
    <property type="entry name" value="ArnA"/>
    <property type="match status" value="1"/>
</dbReference>
<dbReference type="InterPro" id="IPR045869">
    <property type="entry name" value="Arna-like_SDR_e"/>
</dbReference>
<dbReference type="InterPro" id="IPR021168">
    <property type="entry name" value="Bifun_polymyxin_resist_ArnA"/>
</dbReference>
<dbReference type="InterPro" id="IPR001509">
    <property type="entry name" value="Epimerase_deHydtase"/>
</dbReference>
<dbReference type="InterPro" id="IPR005793">
    <property type="entry name" value="Formyl_trans_C"/>
</dbReference>
<dbReference type="InterPro" id="IPR002376">
    <property type="entry name" value="Formyl_transf_N"/>
</dbReference>
<dbReference type="InterPro" id="IPR036477">
    <property type="entry name" value="Formyl_transf_N_sf"/>
</dbReference>
<dbReference type="InterPro" id="IPR011034">
    <property type="entry name" value="Formyl_transferase-like_C_sf"/>
</dbReference>
<dbReference type="InterPro" id="IPR050177">
    <property type="entry name" value="Lipid_A_modif_metabolic_enz"/>
</dbReference>
<dbReference type="InterPro" id="IPR036291">
    <property type="entry name" value="NAD(P)-bd_dom_sf"/>
</dbReference>
<dbReference type="NCBIfam" id="NF005414">
    <property type="entry name" value="PRK06988.1"/>
    <property type="match status" value="1"/>
</dbReference>
<dbReference type="NCBIfam" id="NF005998">
    <property type="entry name" value="PRK08125.1"/>
    <property type="match status" value="1"/>
</dbReference>
<dbReference type="NCBIfam" id="NF008872">
    <property type="entry name" value="PRK11908.1"/>
    <property type="match status" value="1"/>
</dbReference>
<dbReference type="PANTHER" id="PTHR43245">
    <property type="entry name" value="BIFUNCTIONAL POLYMYXIN RESISTANCE PROTEIN ARNA"/>
    <property type="match status" value="1"/>
</dbReference>
<dbReference type="PANTHER" id="PTHR43245:SF13">
    <property type="entry name" value="UDP-D-APIOSE_UDP-D-XYLOSE SYNTHASE 2"/>
    <property type="match status" value="1"/>
</dbReference>
<dbReference type="Pfam" id="PF01370">
    <property type="entry name" value="Epimerase"/>
    <property type="match status" value="1"/>
</dbReference>
<dbReference type="Pfam" id="PF02911">
    <property type="entry name" value="Formyl_trans_C"/>
    <property type="match status" value="1"/>
</dbReference>
<dbReference type="Pfam" id="PF00551">
    <property type="entry name" value="Formyl_trans_N"/>
    <property type="match status" value="1"/>
</dbReference>
<dbReference type="PIRSF" id="PIRSF036506">
    <property type="entry name" value="Bifun_polymyxin_resist_ArnA"/>
    <property type="match status" value="1"/>
</dbReference>
<dbReference type="SUPFAM" id="SSF50486">
    <property type="entry name" value="FMT C-terminal domain-like"/>
    <property type="match status" value="1"/>
</dbReference>
<dbReference type="SUPFAM" id="SSF53328">
    <property type="entry name" value="Formyltransferase"/>
    <property type="match status" value="1"/>
</dbReference>
<dbReference type="SUPFAM" id="SSF51735">
    <property type="entry name" value="NAD(P)-binding Rossmann-fold domains"/>
    <property type="match status" value="1"/>
</dbReference>
<organism>
    <name type="scientific">Escherichia coli O81 (strain ED1a)</name>
    <dbReference type="NCBI Taxonomy" id="585397"/>
    <lineage>
        <taxon>Bacteria</taxon>
        <taxon>Pseudomonadati</taxon>
        <taxon>Pseudomonadota</taxon>
        <taxon>Gammaproteobacteria</taxon>
        <taxon>Enterobacterales</taxon>
        <taxon>Enterobacteriaceae</taxon>
        <taxon>Escherichia</taxon>
    </lineage>
</organism>